<proteinExistence type="evidence at protein level"/>
<evidence type="ECO:0000250" key="1"/>
<evidence type="ECO:0000255" key="2"/>
<evidence type="ECO:0000269" key="3">
    <source>
    </source>
</evidence>
<evidence type="ECO:0000269" key="4">
    <source>
    </source>
</evidence>
<evidence type="ECO:0000269" key="5">
    <source>
    </source>
</evidence>
<evidence type="ECO:0000305" key="6"/>
<dbReference type="EC" id="2.7.8.26"/>
<dbReference type="EMBL" id="L12006">
    <property type="protein sequence ID" value="AAA27270.1"/>
    <property type="molecule type" value="Genomic_DNA"/>
</dbReference>
<dbReference type="EMBL" id="AE006468">
    <property type="protein sequence ID" value="AAL20921.1"/>
    <property type="molecule type" value="Genomic_DNA"/>
</dbReference>
<dbReference type="RefSeq" id="NP_460962.1">
    <property type="nucleotide sequence ID" value="NC_003197.2"/>
</dbReference>
<dbReference type="RefSeq" id="WP_000039997.1">
    <property type="nucleotide sequence ID" value="NC_003197.2"/>
</dbReference>
<dbReference type="STRING" id="99287.STM2017"/>
<dbReference type="PaxDb" id="99287-STM2017"/>
<dbReference type="GeneID" id="1253538"/>
<dbReference type="KEGG" id="stm:STM2017"/>
<dbReference type="PATRIC" id="fig|99287.12.peg.2139"/>
<dbReference type="HOGENOM" id="CLU_057426_3_1_6"/>
<dbReference type="OMA" id="GHTGDTY"/>
<dbReference type="PhylomeDB" id="Q05602"/>
<dbReference type="BioCyc" id="MetaCyc:MONOMER-13212"/>
<dbReference type="BioCyc" id="SENT99287:STM2017-MONOMER"/>
<dbReference type="UniPathway" id="UPA00148">
    <property type="reaction ID" value="UER00238"/>
</dbReference>
<dbReference type="Proteomes" id="UP000001014">
    <property type="component" value="Chromosome"/>
</dbReference>
<dbReference type="GO" id="GO:0005886">
    <property type="term" value="C:plasma membrane"/>
    <property type="evidence" value="ECO:0007669"/>
    <property type="project" value="UniProtKB-SubCell"/>
</dbReference>
<dbReference type="GO" id="GO:0051073">
    <property type="term" value="F:adenosylcobinamide-GDP ribazoletransferase activity"/>
    <property type="evidence" value="ECO:0007669"/>
    <property type="project" value="UniProtKB-UniRule"/>
</dbReference>
<dbReference type="GO" id="GO:0008818">
    <property type="term" value="F:cobalamin 5'-phosphate synthase activity"/>
    <property type="evidence" value="ECO:0007669"/>
    <property type="project" value="UniProtKB-UniRule"/>
</dbReference>
<dbReference type="GO" id="GO:0009236">
    <property type="term" value="P:cobalamin biosynthetic process"/>
    <property type="evidence" value="ECO:0000318"/>
    <property type="project" value="GO_Central"/>
</dbReference>
<dbReference type="HAMAP" id="MF_00719">
    <property type="entry name" value="CobS"/>
    <property type="match status" value="1"/>
</dbReference>
<dbReference type="InterPro" id="IPR003805">
    <property type="entry name" value="CobS"/>
</dbReference>
<dbReference type="NCBIfam" id="TIGR00317">
    <property type="entry name" value="cobS"/>
    <property type="match status" value="1"/>
</dbReference>
<dbReference type="PANTHER" id="PTHR34148">
    <property type="entry name" value="ADENOSYLCOBINAMIDE-GDP RIBAZOLETRANSFERASE"/>
    <property type="match status" value="1"/>
</dbReference>
<dbReference type="PANTHER" id="PTHR34148:SF1">
    <property type="entry name" value="ADENOSYLCOBINAMIDE-GDP RIBAZOLETRANSFERASE"/>
    <property type="match status" value="1"/>
</dbReference>
<dbReference type="Pfam" id="PF02654">
    <property type="entry name" value="CobS"/>
    <property type="match status" value="1"/>
</dbReference>
<organism>
    <name type="scientific">Salmonella typhimurium (strain LT2 / SGSC1412 / ATCC 700720)</name>
    <dbReference type="NCBI Taxonomy" id="99287"/>
    <lineage>
        <taxon>Bacteria</taxon>
        <taxon>Pseudomonadati</taxon>
        <taxon>Pseudomonadota</taxon>
        <taxon>Gammaproteobacteria</taxon>
        <taxon>Enterobacterales</taxon>
        <taxon>Enterobacteriaceae</taxon>
        <taxon>Salmonella</taxon>
    </lineage>
</organism>
<sequence length="247" mass="26316">MSKLFWAMLAFISRLPVPSRWSQGLDFEQYSRGIVMFPFIGLILGGVSGLIFILLQPWCGIPLAALFCILALALLTGGFHLDGLADTCDGIFSARRRERMLEIMRDSRLGTHGGLALIFVLLAKILVVSELALRGTPMLAALAAACAAGRGSAVLLMYRHRYAREEGLGNVFIGKVSGRQTCITLGLAVIVATVLLPGMQGLAAMVVTCAAIFILGQLLKRTLGGQTGDTLGAAIELGELIFLLALL</sequence>
<gene>
    <name type="primary">cobS</name>
    <name type="ordered locus">STM2017</name>
</gene>
<reference key="1">
    <citation type="journal article" date="1993" name="J. Bacteriol.">
        <title>Characterization of the cobalamin (vitamin B12) biosynthetic genes of Salmonella typhimurium.</title>
        <authorList>
            <person name="Roth J.R."/>
            <person name="Lawrence J.G."/>
            <person name="Rubenfield M."/>
            <person name="Kieffer-Higgins S."/>
            <person name="Church G.M."/>
        </authorList>
    </citation>
    <scope>NUCLEOTIDE SEQUENCE [GENOMIC DNA]</scope>
    <source>
        <strain>LT2 / SGSC1412 / ATCC 700720</strain>
    </source>
</reference>
<reference key="2">
    <citation type="journal article" date="2001" name="Nature">
        <title>Complete genome sequence of Salmonella enterica serovar Typhimurium LT2.</title>
        <authorList>
            <person name="McClelland M."/>
            <person name="Sanderson K.E."/>
            <person name="Spieth J."/>
            <person name="Clifton S.W."/>
            <person name="Latreille P."/>
            <person name="Courtney L."/>
            <person name="Porwollik S."/>
            <person name="Ali J."/>
            <person name="Dante M."/>
            <person name="Du F."/>
            <person name="Hou S."/>
            <person name="Layman D."/>
            <person name="Leonard S."/>
            <person name="Nguyen C."/>
            <person name="Scott K."/>
            <person name="Holmes A."/>
            <person name="Grewal N."/>
            <person name="Mulvaney E."/>
            <person name="Ryan E."/>
            <person name="Sun H."/>
            <person name="Florea L."/>
            <person name="Miller W."/>
            <person name="Stoneking T."/>
            <person name="Nhan M."/>
            <person name="Waterston R."/>
            <person name="Wilson R.K."/>
        </authorList>
    </citation>
    <scope>NUCLEOTIDE SEQUENCE [LARGE SCALE GENOMIC DNA]</scope>
    <source>
        <strain>LT2 / SGSC1412 / ATCC 700720</strain>
    </source>
</reference>
<reference key="3">
    <citation type="journal article" date="1999" name="Proc. Natl. Acad. Sci. U.S.A.">
        <title>In vitro synthesis of the nucleotide loop of cobalamin by Salmonella typhimurium enzymes.</title>
        <authorList>
            <person name="Maggio-Hall L.A."/>
            <person name="Escalante-Semerena J.C."/>
        </authorList>
    </citation>
    <scope>FUNCTION</scope>
    <scope>CATALYTIC ACTIVITY</scope>
    <source>
        <strain>LT2 / TR6583 / SA2929</strain>
    </source>
</reference>
<reference key="4">
    <citation type="journal article" date="2004" name="Microbiology">
        <title>The last step in coenzyme B(12) synthesis is localized to the cell membrane in bacteria and archaea.</title>
        <authorList>
            <person name="Maggio-Hall L.A."/>
            <person name="Claas K.R."/>
            <person name="Escalante-Semerena J.C."/>
        </authorList>
    </citation>
    <scope>SUBCELLULAR LOCATION</scope>
    <source>
        <strain>LT2 / TR6583 / SA2929</strain>
    </source>
</reference>
<reference key="5">
    <citation type="journal article" date="2007" name="J. Bacteriol.">
        <title>Reassessment of the late steps of coenzyme B12 synthesis in Salmonella enterica: evidence that dephosphorylation of adenosylcobalamin-5'-phosphate by the CobC phosphatase is the last step of the pathway.</title>
        <authorList>
            <person name="Zayas C.L."/>
            <person name="Escalante-Semerena J.C."/>
        </authorList>
    </citation>
    <scope>FUNCTION</scope>
    <scope>CATALYTIC ACTIVITY</scope>
</reference>
<comment type="function">
    <text evidence="3 5">Joins adenosylcobinamide-GDP and alpha-ribazole to generate adenosylcobalamin (Ado-cobalamin). Also synthesizes adenosylcobalamin 5'-phosphate from adenosylcobinamide-GDP and alpha-ribazole 5'-phosphate.</text>
</comment>
<comment type="catalytic activity">
    <reaction>
        <text>alpha-ribazole + adenosylcob(III)inamide-GDP = adenosylcob(III)alamin + GMP + H(+)</text>
        <dbReference type="Rhea" id="RHEA:16049"/>
        <dbReference type="ChEBI" id="CHEBI:10329"/>
        <dbReference type="ChEBI" id="CHEBI:15378"/>
        <dbReference type="ChEBI" id="CHEBI:18408"/>
        <dbReference type="ChEBI" id="CHEBI:58115"/>
        <dbReference type="ChEBI" id="CHEBI:60487"/>
        <dbReference type="EC" id="2.7.8.26"/>
    </reaction>
</comment>
<comment type="catalytic activity">
    <reaction>
        <text>alpha-ribazole 5'-phosphate + adenosylcob(III)inamide-GDP = adenosylcob(III)alamin 5'-phosphate + GMP + H(+)</text>
        <dbReference type="Rhea" id="RHEA:23560"/>
        <dbReference type="ChEBI" id="CHEBI:15378"/>
        <dbReference type="ChEBI" id="CHEBI:57918"/>
        <dbReference type="ChEBI" id="CHEBI:58115"/>
        <dbReference type="ChEBI" id="CHEBI:60487"/>
        <dbReference type="ChEBI" id="CHEBI:60493"/>
        <dbReference type="EC" id="2.7.8.26"/>
    </reaction>
</comment>
<comment type="cofactor">
    <cofactor evidence="1">
        <name>Mg(2+)</name>
        <dbReference type="ChEBI" id="CHEBI:18420"/>
    </cofactor>
</comment>
<comment type="pathway">
    <text>Cofactor biosynthesis; adenosylcobalamin biosynthesis; adenosylcobalamin from cob(II)yrinate a,c-diamide: step 7/7.</text>
</comment>
<comment type="subcellular location">
    <subcellularLocation>
        <location evidence="4">Cell inner membrane</location>
        <topology evidence="4">Multi-pass membrane protein</topology>
    </subcellularLocation>
</comment>
<comment type="similarity">
    <text evidence="6">Belongs to the CobS family.</text>
</comment>
<feature type="chain" id="PRO_0000146895" description="Adenosylcobinamide-GDP ribazoletransferase">
    <location>
        <begin position="1"/>
        <end position="247"/>
    </location>
</feature>
<feature type="transmembrane region" description="Helical" evidence="2">
    <location>
        <begin position="34"/>
        <end position="54"/>
    </location>
</feature>
<feature type="transmembrane region" description="Helical" evidence="2">
    <location>
        <begin position="59"/>
        <end position="79"/>
    </location>
</feature>
<feature type="transmembrane region" description="Helical" evidence="2">
    <location>
        <begin position="113"/>
        <end position="133"/>
    </location>
</feature>
<feature type="transmembrane region" description="Helical" evidence="2">
    <location>
        <begin position="138"/>
        <end position="158"/>
    </location>
</feature>
<feature type="transmembrane region" description="Helical" evidence="2">
    <location>
        <begin position="187"/>
        <end position="207"/>
    </location>
</feature>
<feature type="sequence conflict" description="In Ref. 1; AAA27270." evidence="6" ref="1">
    <original>L</original>
    <variation>P</variation>
    <location>
        <position position="4"/>
    </location>
</feature>
<feature type="sequence conflict" description="In Ref. 1; AAA27270." evidence="6" ref="1">
    <original>W</original>
    <variation>R</variation>
    <location>
        <position position="21"/>
    </location>
</feature>
<name>COBS_SALTY</name>
<keyword id="KW-0997">Cell inner membrane</keyword>
<keyword id="KW-1003">Cell membrane</keyword>
<keyword id="KW-0169">Cobalamin biosynthesis</keyword>
<keyword id="KW-0460">Magnesium</keyword>
<keyword id="KW-0472">Membrane</keyword>
<keyword id="KW-1185">Reference proteome</keyword>
<keyword id="KW-0808">Transferase</keyword>
<keyword id="KW-0812">Transmembrane</keyword>
<keyword id="KW-1133">Transmembrane helix</keyword>
<accession>Q05602</accession>
<protein>
    <recommendedName>
        <fullName>Adenosylcobinamide-GDP ribazoletransferase</fullName>
        <ecNumber>2.7.8.26</ecNumber>
    </recommendedName>
    <alternativeName>
        <fullName>Cobalamin synthase</fullName>
    </alternativeName>
    <alternativeName>
        <fullName>Cobalamin-5'-phosphate synthase</fullName>
    </alternativeName>
</protein>